<gene>
    <name type="primary">Tceal9</name>
    <name type="synonym">Wbp5</name>
</gene>
<comment type="function">
    <text evidence="4">May be involved in transcriptional regulation.</text>
</comment>
<comment type="subcellular location">
    <subcellularLocation>
        <location evidence="4">Nucleus</location>
    </subcellularLocation>
</comment>
<comment type="similarity">
    <text evidence="4">Belongs to the TFS-II family. TFA subfamily.</text>
</comment>
<comment type="sequence caution" evidence="4">
    <conflict type="erroneous translation">
        <sequence resource="EMBL-CDS" id="AAC53191"/>
    </conflict>
    <text>Wrong choice of frame.</text>
</comment>
<name>TCAL9_MOUSE</name>
<reference key="1">
    <citation type="journal article" date="1997" name="EMBO J.">
        <title>FBP WW domains and the Abl SH3 domain bind to a specific class of proline-rich ligands.</title>
        <authorList>
            <person name="Bedford M.T."/>
            <person name="Chan D.C."/>
            <person name="Leder P."/>
        </authorList>
    </citation>
    <scope>NUCLEOTIDE SEQUENCE [MRNA]</scope>
    <source>
        <tissue>Limb</tissue>
    </source>
</reference>
<reference key="2">
    <citation type="submission" date="2003-11" db="EMBL/GenBank/DDBJ databases">
        <title>Schlafen 8 (Slfn8) implicated in control of lymphoid differentiation and growth interacts with a new transcription elongation factor II-S like (TCEAL)-related protein.</title>
        <authorList>
            <person name="Kaiser F."/>
            <person name="Kaufmann S.H.E."/>
            <person name="Zerrahn J."/>
        </authorList>
    </citation>
    <scope>NUCLEOTIDE SEQUENCE [MRNA]</scope>
    <source>
        <strain>C57BL/6J</strain>
        <tissue>Macrophage</tissue>
    </source>
</reference>
<reference key="3">
    <citation type="journal article" date="2005" name="Science">
        <title>The transcriptional landscape of the mammalian genome.</title>
        <authorList>
            <person name="Carninci P."/>
            <person name="Kasukawa T."/>
            <person name="Katayama S."/>
            <person name="Gough J."/>
            <person name="Frith M.C."/>
            <person name="Maeda N."/>
            <person name="Oyama R."/>
            <person name="Ravasi T."/>
            <person name="Lenhard B."/>
            <person name="Wells C."/>
            <person name="Kodzius R."/>
            <person name="Shimokawa K."/>
            <person name="Bajic V.B."/>
            <person name="Brenner S.E."/>
            <person name="Batalov S."/>
            <person name="Forrest A.R."/>
            <person name="Zavolan M."/>
            <person name="Davis M.J."/>
            <person name="Wilming L.G."/>
            <person name="Aidinis V."/>
            <person name="Allen J.E."/>
            <person name="Ambesi-Impiombato A."/>
            <person name="Apweiler R."/>
            <person name="Aturaliya R.N."/>
            <person name="Bailey T.L."/>
            <person name="Bansal M."/>
            <person name="Baxter L."/>
            <person name="Beisel K.W."/>
            <person name="Bersano T."/>
            <person name="Bono H."/>
            <person name="Chalk A.M."/>
            <person name="Chiu K.P."/>
            <person name="Choudhary V."/>
            <person name="Christoffels A."/>
            <person name="Clutterbuck D.R."/>
            <person name="Crowe M.L."/>
            <person name="Dalla E."/>
            <person name="Dalrymple B.P."/>
            <person name="de Bono B."/>
            <person name="Della Gatta G."/>
            <person name="di Bernardo D."/>
            <person name="Down T."/>
            <person name="Engstrom P."/>
            <person name="Fagiolini M."/>
            <person name="Faulkner G."/>
            <person name="Fletcher C.F."/>
            <person name="Fukushima T."/>
            <person name="Furuno M."/>
            <person name="Futaki S."/>
            <person name="Gariboldi M."/>
            <person name="Georgii-Hemming P."/>
            <person name="Gingeras T.R."/>
            <person name="Gojobori T."/>
            <person name="Green R.E."/>
            <person name="Gustincich S."/>
            <person name="Harbers M."/>
            <person name="Hayashi Y."/>
            <person name="Hensch T.K."/>
            <person name="Hirokawa N."/>
            <person name="Hill D."/>
            <person name="Huminiecki L."/>
            <person name="Iacono M."/>
            <person name="Ikeo K."/>
            <person name="Iwama A."/>
            <person name="Ishikawa T."/>
            <person name="Jakt M."/>
            <person name="Kanapin A."/>
            <person name="Katoh M."/>
            <person name="Kawasawa Y."/>
            <person name="Kelso J."/>
            <person name="Kitamura H."/>
            <person name="Kitano H."/>
            <person name="Kollias G."/>
            <person name="Krishnan S.P."/>
            <person name="Kruger A."/>
            <person name="Kummerfeld S.K."/>
            <person name="Kurochkin I.V."/>
            <person name="Lareau L.F."/>
            <person name="Lazarevic D."/>
            <person name="Lipovich L."/>
            <person name="Liu J."/>
            <person name="Liuni S."/>
            <person name="McWilliam S."/>
            <person name="Madan Babu M."/>
            <person name="Madera M."/>
            <person name="Marchionni L."/>
            <person name="Matsuda H."/>
            <person name="Matsuzawa S."/>
            <person name="Miki H."/>
            <person name="Mignone F."/>
            <person name="Miyake S."/>
            <person name="Morris K."/>
            <person name="Mottagui-Tabar S."/>
            <person name="Mulder N."/>
            <person name="Nakano N."/>
            <person name="Nakauchi H."/>
            <person name="Ng P."/>
            <person name="Nilsson R."/>
            <person name="Nishiguchi S."/>
            <person name="Nishikawa S."/>
            <person name="Nori F."/>
            <person name="Ohara O."/>
            <person name="Okazaki Y."/>
            <person name="Orlando V."/>
            <person name="Pang K.C."/>
            <person name="Pavan W.J."/>
            <person name="Pavesi G."/>
            <person name="Pesole G."/>
            <person name="Petrovsky N."/>
            <person name="Piazza S."/>
            <person name="Reed J."/>
            <person name="Reid J.F."/>
            <person name="Ring B.Z."/>
            <person name="Ringwald M."/>
            <person name="Rost B."/>
            <person name="Ruan Y."/>
            <person name="Salzberg S.L."/>
            <person name="Sandelin A."/>
            <person name="Schneider C."/>
            <person name="Schoenbach C."/>
            <person name="Sekiguchi K."/>
            <person name="Semple C.A."/>
            <person name="Seno S."/>
            <person name="Sessa L."/>
            <person name="Sheng Y."/>
            <person name="Shibata Y."/>
            <person name="Shimada H."/>
            <person name="Shimada K."/>
            <person name="Silva D."/>
            <person name="Sinclair B."/>
            <person name="Sperling S."/>
            <person name="Stupka E."/>
            <person name="Sugiura K."/>
            <person name="Sultana R."/>
            <person name="Takenaka Y."/>
            <person name="Taki K."/>
            <person name="Tammoja K."/>
            <person name="Tan S.L."/>
            <person name="Tang S."/>
            <person name="Taylor M.S."/>
            <person name="Tegner J."/>
            <person name="Teichmann S.A."/>
            <person name="Ueda H.R."/>
            <person name="van Nimwegen E."/>
            <person name="Verardo R."/>
            <person name="Wei C.L."/>
            <person name="Yagi K."/>
            <person name="Yamanishi H."/>
            <person name="Zabarovsky E."/>
            <person name="Zhu S."/>
            <person name="Zimmer A."/>
            <person name="Hide W."/>
            <person name="Bult C."/>
            <person name="Grimmond S.M."/>
            <person name="Teasdale R.D."/>
            <person name="Liu E.T."/>
            <person name="Brusic V."/>
            <person name="Quackenbush J."/>
            <person name="Wahlestedt C."/>
            <person name="Mattick J.S."/>
            <person name="Hume D.A."/>
            <person name="Kai C."/>
            <person name="Sasaki D."/>
            <person name="Tomaru Y."/>
            <person name="Fukuda S."/>
            <person name="Kanamori-Katayama M."/>
            <person name="Suzuki M."/>
            <person name="Aoki J."/>
            <person name="Arakawa T."/>
            <person name="Iida J."/>
            <person name="Imamura K."/>
            <person name="Itoh M."/>
            <person name="Kato T."/>
            <person name="Kawaji H."/>
            <person name="Kawagashira N."/>
            <person name="Kawashima T."/>
            <person name="Kojima M."/>
            <person name="Kondo S."/>
            <person name="Konno H."/>
            <person name="Nakano K."/>
            <person name="Ninomiya N."/>
            <person name="Nishio T."/>
            <person name="Okada M."/>
            <person name="Plessy C."/>
            <person name="Shibata K."/>
            <person name="Shiraki T."/>
            <person name="Suzuki S."/>
            <person name="Tagami M."/>
            <person name="Waki K."/>
            <person name="Watahiki A."/>
            <person name="Okamura-Oho Y."/>
            <person name="Suzuki H."/>
            <person name="Kawai J."/>
            <person name="Hayashizaki Y."/>
        </authorList>
    </citation>
    <scope>NUCLEOTIDE SEQUENCE [LARGE SCALE MRNA]</scope>
    <source>
        <strain>C57BL/6J</strain>
        <tissue>Kidney</tissue>
    </source>
</reference>
<reference key="4">
    <citation type="journal article" date="2009" name="PLoS Biol.">
        <title>Lineage-specific biology revealed by a finished genome assembly of the mouse.</title>
        <authorList>
            <person name="Church D.M."/>
            <person name="Goodstadt L."/>
            <person name="Hillier L.W."/>
            <person name="Zody M.C."/>
            <person name="Goldstein S."/>
            <person name="She X."/>
            <person name="Bult C.J."/>
            <person name="Agarwala R."/>
            <person name="Cherry J.L."/>
            <person name="DiCuccio M."/>
            <person name="Hlavina W."/>
            <person name="Kapustin Y."/>
            <person name="Meric P."/>
            <person name="Maglott D."/>
            <person name="Birtle Z."/>
            <person name="Marques A.C."/>
            <person name="Graves T."/>
            <person name="Zhou S."/>
            <person name="Teague B."/>
            <person name="Potamousis K."/>
            <person name="Churas C."/>
            <person name="Place M."/>
            <person name="Herschleb J."/>
            <person name="Runnheim R."/>
            <person name="Forrest D."/>
            <person name="Amos-Landgraf J."/>
            <person name="Schwartz D.C."/>
            <person name="Cheng Z."/>
            <person name="Lindblad-Toh K."/>
            <person name="Eichler E.E."/>
            <person name="Ponting C.P."/>
        </authorList>
    </citation>
    <scope>NUCLEOTIDE SEQUENCE [LARGE SCALE GENOMIC DNA]</scope>
    <source>
        <strain>C57BL/6J</strain>
    </source>
</reference>
<reference key="5">
    <citation type="journal article" date="2004" name="Genome Res.">
        <title>The status, quality, and expansion of the NIH full-length cDNA project: the Mammalian Gene Collection (MGC).</title>
        <authorList>
            <consortium name="The MGC Project Team"/>
        </authorList>
    </citation>
    <scope>NUCLEOTIDE SEQUENCE [LARGE SCALE MRNA]</scope>
    <source>
        <tissue>Mammary tumor</tissue>
    </source>
</reference>
<feature type="chain" id="PRO_0000274047" description="Transcription elongation factor A protein-like 9">
    <location>
        <begin position="1"/>
        <end position="104"/>
    </location>
</feature>
<feature type="region of interest" description="Disordered" evidence="2">
    <location>
        <begin position="1"/>
        <end position="48"/>
    </location>
</feature>
<feature type="compositionally biased region" description="Basic and acidic residues" evidence="2">
    <location>
        <begin position="9"/>
        <end position="31"/>
    </location>
</feature>
<feature type="compositionally biased region" description="Acidic residues" evidence="2">
    <location>
        <begin position="32"/>
        <end position="41"/>
    </location>
</feature>
<sequence length="104" mass="12664">MKPCQKMEGNLEKEDEPKPEEEPKPEEKPEEGQEPEEEEKSEETFRERLIRSLQDFQEDIHNRHLSSDDLFRDVEELDEIRKVRNKLIVTRWKANRSHPYPYLM</sequence>
<evidence type="ECO:0000250" key="1">
    <source>
        <dbReference type="UniProtKB" id="Q9UHQ7"/>
    </source>
</evidence>
<evidence type="ECO:0000256" key="2">
    <source>
        <dbReference type="SAM" id="MobiDB-lite"/>
    </source>
</evidence>
<evidence type="ECO:0000303" key="3">
    <source ref="2"/>
</evidence>
<evidence type="ECO:0000305" key="4"/>
<protein>
    <recommendedName>
        <fullName evidence="1">Transcription elongation factor A protein-like 9</fullName>
        <shortName>TCEA-like protein 9</shortName>
    </recommendedName>
    <alternativeName>
        <fullName evidence="3">Schlafen 8-interacting protein</fullName>
    </alternativeName>
    <alternativeName>
        <fullName>Transcription elongation factor S-II protein-like 9</fullName>
    </alternativeName>
    <alternativeName>
        <fullName>WW domain-binding protein 5</fullName>
        <shortName>WBP-5</shortName>
    </alternativeName>
</protein>
<accession>Q9DD24</accession>
<accession>A3KG99</accession>
<accession>O08549</accession>
<organism>
    <name type="scientific">Mus musculus</name>
    <name type="common">Mouse</name>
    <dbReference type="NCBI Taxonomy" id="10090"/>
    <lineage>
        <taxon>Eukaryota</taxon>
        <taxon>Metazoa</taxon>
        <taxon>Chordata</taxon>
        <taxon>Craniata</taxon>
        <taxon>Vertebrata</taxon>
        <taxon>Euteleostomi</taxon>
        <taxon>Mammalia</taxon>
        <taxon>Eutheria</taxon>
        <taxon>Euarchontoglires</taxon>
        <taxon>Glires</taxon>
        <taxon>Rodentia</taxon>
        <taxon>Myomorpha</taxon>
        <taxon>Muroidea</taxon>
        <taxon>Muridae</taxon>
        <taxon>Murinae</taxon>
        <taxon>Mus</taxon>
        <taxon>Mus</taxon>
    </lineage>
</organism>
<keyword id="KW-0539">Nucleus</keyword>
<keyword id="KW-1185">Reference proteome</keyword>
<keyword id="KW-0804">Transcription</keyword>
<keyword id="KW-0805">Transcription regulation</keyword>
<proteinExistence type="inferred from homology"/>
<dbReference type="EMBL" id="U92454">
    <property type="protein sequence ID" value="AAC53191.1"/>
    <property type="status" value="ALT_SEQ"/>
    <property type="molecule type" value="mRNA"/>
</dbReference>
<dbReference type="EMBL" id="AY459189">
    <property type="protein sequence ID" value="AAS16484.1"/>
    <property type="molecule type" value="mRNA"/>
</dbReference>
<dbReference type="EMBL" id="AK002214">
    <property type="protein sequence ID" value="BAB21940.1"/>
    <property type="molecule type" value="mRNA"/>
</dbReference>
<dbReference type="EMBL" id="AL671493">
    <property type="status" value="NOT_ANNOTATED_CDS"/>
    <property type="molecule type" value="Genomic_DNA"/>
</dbReference>
<dbReference type="EMBL" id="BC007478">
    <property type="protein sequence ID" value="AAH07478.1"/>
    <property type="molecule type" value="mRNA"/>
</dbReference>
<dbReference type="CCDS" id="CCDS30418.1"/>
<dbReference type="RefSeq" id="NP_035842.1">
    <property type="nucleotide sequence ID" value="NM_011712.2"/>
</dbReference>
<dbReference type="FunCoup" id="Q9DD24">
    <property type="interactions" value="31"/>
</dbReference>
<dbReference type="STRING" id="10090.ENSMUSP00000047474"/>
<dbReference type="iPTMnet" id="Q9DD24"/>
<dbReference type="PhosphoSitePlus" id="Q9DD24"/>
<dbReference type="PaxDb" id="10090-ENSMUSP00000047474"/>
<dbReference type="ProteomicsDB" id="263260"/>
<dbReference type="Pumba" id="Q9DD24"/>
<dbReference type="Antibodypedia" id="1302">
    <property type="antibodies" value="57 antibodies from 14 providers"/>
</dbReference>
<dbReference type="DNASU" id="22381"/>
<dbReference type="Ensembl" id="ENSMUST00000048687.11">
    <property type="protein sequence ID" value="ENSMUSP00000047474.5"/>
    <property type="gene ID" value="ENSMUSG00000042712.11"/>
</dbReference>
<dbReference type="Ensembl" id="ENSMUST00000113115.2">
    <property type="protein sequence ID" value="ENSMUSP00000108740.2"/>
    <property type="gene ID" value="ENSMUSG00000042712.11"/>
</dbReference>
<dbReference type="GeneID" id="22381"/>
<dbReference type="KEGG" id="mmu:22381"/>
<dbReference type="UCSC" id="uc009uij.1">
    <property type="organism name" value="mouse"/>
</dbReference>
<dbReference type="AGR" id="MGI:109567"/>
<dbReference type="CTD" id="51186"/>
<dbReference type="MGI" id="MGI:109567">
    <property type="gene designation" value="Tceal9"/>
</dbReference>
<dbReference type="VEuPathDB" id="HostDB:ENSMUSG00000042712"/>
<dbReference type="eggNOG" id="ENOG502R6G6">
    <property type="taxonomic scope" value="Eukaryota"/>
</dbReference>
<dbReference type="GeneTree" id="ENSGT00950000183164"/>
<dbReference type="HOGENOM" id="CLU_181913_0_0_1"/>
<dbReference type="InParanoid" id="Q9DD24"/>
<dbReference type="OMA" id="KEDMFRN"/>
<dbReference type="OrthoDB" id="9836048at2759"/>
<dbReference type="PhylomeDB" id="Q9DD24"/>
<dbReference type="BioGRID-ORCS" id="22381">
    <property type="hits" value="3 hits in 77 CRISPR screens"/>
</dbReference>
<dbReference type="ChiTaRS" id="Tceal9">
    <property type="organism name" value="mouse"/>
</dbReference>
<dbReference type="PRO" id="PR:Q9DD24"/>
<dbReference type="Proteomes" id="UP000000589">
    <property type="component" value="Chromosome X"/>
</dbReference>
<dbReference type="RNAct" id="Q9DD24">
    <property type="molecule type" value="protein"/>
</dbReference>
<dbReference type="Bgee" id="ENSMUSG00000042712">
    <property type="expression patterns" value="Expressed in urogenital fold and 265 other cell types or tissues"/>
</dbReference>
<dbReference type="GO" id="GO:0005634">
    <property type="term" value="C:nucleus"/>
    <property type="evidence" value="ECO:0007669"/>
    <property type="project" value="UniProtKB-SubCell"/>
</dbReference>
<dbReference type="GO" id="GO:0050699">
    <property type="term" value="F:WW domain binding"/>
    <property type="evidence" value="ECO:0000353"/>
    <property type="project" value="MGI"/>
</dbReference>
<dbReference type="InterPro" id="IPR021156">
    <property type="entry name" value="TF_A-like/BEX"/>
</dbReference>
<dbReference type="Pfam" id="PF04538">
    <property type="entry name" value="BEX"/>
    <property type="match status" value="1"/>
</dbReference>